<reference key="1">
    <citation type="journal article" date="2001" name="Lancet">
        <title>Whole genome sequencing of meticillin-resistant Staphylococcus aureus.</title>
        <authorList>
            <person name="Kuroda M."/>
            <person name="Ohta T."/>
            <person name="Uchiyama I."/>
            <person name="Baba T."/>
            <person name="Yuzawa H."/>
            <person name="Kobayashi I."/>
            <person name="Cui L."/>
            <person name="Oguchi A."/>
            <person name="Aoki K."/>
            <person name="Nagai Y."/>
            <person name="Lian J.-Q."/>
            <person name="Ito T."/>
            <person name="Kanamori M."/>
            <person name="Matsumaru H."/>
            <person name="Maruyama A."/>
            <person name="Murakami H."/>
            <person name="Hosoyama A."/>
            <person name="Mizutani-Ui Y."/>
            <person name="Takahashi N.K."/>
            <person name="Sawano T."/>
            <person name="Inoue R."/>
            <person name="Kaito C."/>
            <person name="Sekimizu K."/>
            <person name="Hirakawa H."/>
            <person name="Kuhara S."/>
            <person name="Goto S."/>
            <person name="Yabuzaki J."/>
            <person name="Kanehisa M."/>
            <person name="Yamashita A."/>
            <person name="Oshima K."/>
            <person name="Furuya K."/>
            <person name="Yoshino C."/>
            <person name="Shiba T."/>
            <person name="Hattori M."/>
            <person name="Ogasawara N."/>
            <person name="Hayashi H."/>
            <person name="Hiramatsu K."/>
        </authorList>
    </citation>
    <scope>NUCLEOTIDE SEQUENCE [LARGE SCALE GENOMIC DNA]</scope>
    <source>
        <strain>Mu50 / ATCC 700699</strain>
    </source>
</reference>
<proteinExistence type="inferred from homology"/>
<keyword id="KW-0687">Ribonucleoprotein</keyword>
<keyword id="KW-0689">Ribosomal protein</keyword>
<sequence length="145" mass="16333">MRQTFMANESNIERKWYVIDAEGQTLGRLSSEVASILRGKNKVTYTPHVDTGDYVIVINASKIEFTGNKETDKVYYRHSNHPGGIKSITAGELRRTNPERLIENSIKGMLPSTRLGEKQGKKLFVYGGAEHPHAAQQPENYELRG</sequence>
<comment type="function">
    <text evidence="1">This protein is one of the early assembly proteins of the 50S ribosomal subunit, although it is not seen to bind rRNA by itself. It is important during the early stages of 50S assembly.</text>
</comment>
<comment type="subunit">
    <text evidence="1">Part of the 50S ribosomal subunit.</text>
</comment>
<comment type="similarity">
    <text evidence="1">Belongs to the universal ribosomal protein uL13 family.</text>
</comment>
<protein>
    <recommendedName>
        <fullName evidence="1">Large ribosomal subunit protein uL13</fullName>
    </recommendedName>
    <alternativeName>
        <fullName evidence="2">50S ribosomal protein L13</fullName>
    </alternativeName>
</protein>
<organism>
    <name type="scientific">Staphylococcus aureus (strain Mu50 / ATCC 700699)</name>
    <dbReference type="NCBI Taxonomy" id="158878"/>
    <lineage>
        <taxon>Bacteria</taxon>
        <taxon>Bacillati</taxon>
        <taxon>Bacillota</taxon>
        <taxon>Bacilli</taxon>
        <taxon>Bacillales</taxon>
        <taxon>Staphylococcaceae</taxon>
        <taxon>Staphylococcus</taxon>
    </lineage>
</organism>
<accession>Q99S51</accession>
<evidence type="ECO:0000255" key="1">
    <source>
        <dbReference type="HAMAP-Rule" id="MF_01366"/>
    </source>
</evidence>
<evidence type="ECO:0000305" key="2"/>
<gene>
    <name evidence="1" type="primary">rplM</name>
    <name type="ordered locus">SAV2218</name>
</gene>
<dbReference type="EMBL" id="BA000017">
    <property type="protein sequence ID" value="BAB58380.1"/>
    <property type="molecule type" value="Genomic_DNA"/>
</dbReference>
<dbReference type="RefSeq" id="WP_001250038.1">
    <property type="nucleotide sequence ID" value="NC_002758.2"/>
</dbReference>
<dbReference type="SMR" id="Q99S51"/>
<dbReference type="GeneID" id="98346530"/>
<dbReference type="KEGG" id="sav:SAV2218"/>
<dbReference type="HOGENOM" id="CLU_082184_2_2_9"/>
<dbReference type="PhylomeDB" id="Q99S51"/>
<dbReference type="Proteomes" id="UP000002481">
    <property type="component" value="Chromosome"/>
</dbReference>
<dbReference type="GO" id="GO:0022625">
    <property type="term" value="C:cytosolic large ribosomal subunit"/>
    <property type="evidence" value="ECO:0007669"/>
    <property type="project" value="TreeGrafter"/>
</dbReference>
<dbReference type="GO" id="GO:0003729">
    <property type="term" value="F:mRNA binding"/>
    <property type="evidence" value="ECO:0007669"/>
    <property type="project" value="TreeGrafter"/>
</dbReference>
<dbReference type="GO" id="GO:0003735">
    <property type="term" value="F:structural constituent of ribosome"/>
    <property type="evidence" value="ECO:0007669"/>
    <property type="project" value="InterPro"/>
</dbReference>
<dbReference type="GO" id="GO:0017148">
    <property type="term" value="P:negative regulation of translation"/>
    <property type="evidence" value="ECO:0007669"/>
    <property type="project" value="TreeGrafter"/>
</dbReference>
<dbReference type="GO" id="GO:0006412">
    <property type="term" value="P:translation"/>
    <property type="evidence" value="ECO:0007669"/>
    <property type="project" value="UniProtKB-UniRule"/>
</dbReference>
<dbReference type="CDD" id="cd00392">
    <property type="entry name" value="Ribosomal_L13"/>
    <property type="match status" value="1"/>
</dbReference>
<dbReference type="FunFam" id="3.90.1180.10:FF:000001">
    <property type="entry name" value="50S ribosomal protein L13"/>
    <property type="match status" value="1"/>
</dbReference>
<dbReference type="Gene3D" id="3.90.1180.10">
    <property type="entry name" value="Ribosomal protein L13"/>
    <property type="match status" value="1"/>
</dbReference>
<dbReference type="HAMAP" id="MF_01366">
    <property type="entry name" value="Ribosomal_uL13"/>
    <property type="match status" value="1"/>
</dbReference>
<dbReference type="InterPro" id="IPR005822">
    <property type="entry name" value="Ribosomal_uL13"/>
</dbReference>
<dbReference type="InterPro" id="IPR005823">
    <property type="entry name" value="Ribosomal_uL13_bac-type"/>
</dbReference>
<dbReference type="InterPro" id="IPR023563">
    <property type="entry name" value="Ribosomal_uL13_CS"/>
</dbReference>
<dbReference type="InterPro" id="IPR036899">
    <property type="entry name" value="Ribosomal_uL13_sf"/>
</dbReference>
<dbReference type="NCBIfam" id="TIGR01066">
    <property type="entry name" value="rplM_bact"/>
    <property type="match status" value="1"/>
</dbReference>
<dbReference type="PANTHER" id="PTHR11545:SF2">
    <property type="entry name" value="LARGE RIBOSOMAL SUBUNIT PROTEIN UL13M"/>
    <property type="match status" value="1"/>
</dbReference>
<dbReference type="PANTHER" id="PTHR11545">
    <property type="entry name" value="RIBOSOMAL PROTEIN L13"/>
    <property type="match status" value="1"/>
</dbReference>
<dbReference type="Pfam" id="PF00572">
    <property type="entry name" value="Ribosomal_L13"/>
    <property type="match status" value="1"/>
</dbReference>
<dbReference type="PIRSF" id="PIRSF002181">
    <property type="entry name" value="Ribosomal_L13"/>
    <property type="match status" value="1"/>
</dbReference>
<dbReference type="SUPFAM" id="SSF52161">
    <property type="entry name" value="Ribosomal protein L13"/>
    <property type="match status" value="1"/>
</dbReference>
<dbReference type="PROSITE" id="PS00783">
    <property type="entry name" value="RIBOSOMAL_L13"/>
    <property type="match status" value="1"/>
</dbReference>
<feature type="chain" id="PRO_0000223975" description="Large ribosomal subunit protein uL13">
    <location>
        <begin position="1"/>
        <end position="145"/>
    </location>
</feature>
<name>RL13_STAAM</name>